<protein>
    <recommendedName>
        <fullName evidence="1">Serine hydroxymethyltransferase</fullName>
        <shortName evidence="1">SHMT</shortName>
        <shortName evidence="1">Serine methylase</shortName>
        <ecNumber evidence="1">2.1.2.1</ecNumber>
    </recommendedName>
</protein>
<comment type="function">
    <text evidence="1">Catalyzes the reversible interconversion of serine and glycine with tetrahydrofolate (THF) serving as the one-carbon carrier. This reaction serves as the major source of one-carbon groups required for the biosynthesis of purines, thymidylate, methionine, and other important biomolecules. Also exhibits THF-independent aldolase activity toward beta-hydroxyamino acids, producing glycine and aldehydes, via a retro-aldol mechanism.</text>
</comment>
<comment type="catalytic activity">
    <reaction evidence="1">
        <text>(6R)-5,10-methylene-5,6,7,8-tetrahydrofolate + glycine + H2O = (6S)-5,6,7,8-tetrahydrofolate + L-serine</text>
        <dbReference type="Rhea" id="RHEA:15481"/>
        <dbReference type="ChEBI" id="CHEBI:15377"/>
        <dbReference type="ChEBI" id="CHEBI:15636"/>
        <dbReference type="ChEBI" id="CHEBI:33384"/>
        <dbReference type="ChEBI" id="CHEBI:57305"/>
        <dbReference type="ChEBI" id="CHEBI:57453"/>
        <dbReference type="EC" id="2.1.2.1"/>
    </reaction>
</comment>
<comment type="cofactor">
    <cofactor evidence="1">
        <name>pyridoxal 5'-phosphate</name>
        <dbReference type="ChEBI" id="CHEBI:597326"/>
    </cofactor>
</comment>
<comment type="pathway">
    <text evidence="1">One-carbon metabolism; tetrahydrofolate interconversion.</text>
</comment>
<comment type="pathway">
    <text evidence="1">Amino-acid biosynthesis; glycine biosynthesis; glycine from L-serine: step 1/1.</text>
</comment>
<comment type="subunit">
    <text evidence="1">Homodimer.</text>
</comment>
<comment type="subcellular location">
    <subcellularLocation>
        <location evidence="1">Cytoplasm</location>
    </subcellularLocation>
</comment>
<comment type="similarity">
    <text evidence="1">Belongs to the SHMT family.</text>
</comment>
<reference key="1">
    <citation type="journal article" date="2005" name="J. Bacteriol.">
        <title>Whole-genome sequencing of Staphylococcus haemolyticus uncovers the extreme plasticity of its genome and the evolution of human-colonizing staphylococcal species.</title>
        <authorList>
            <person name="Takeuchi F."/>
            <person name="Watanabe S."/>
            <person name="Baba T."/>
            <person name="Yuzawa H."/>
            <person name="Ito T."/>
            <person name="Morimoto Y."/>
            <person name="Kuroda M."/>
            <person name="Cui L."/>
            <person name="Takahashi M."/>
            <person name="Ankai A."/>
            <person name="Baba S."/>
            <person name="Fukui S."/>
            <person name="Lee J.C."/>
            <person name="Hiramatsu K."/>
        </authorList>
    </citation>
    <scope>NUCLEOTIDE SEQUENCE [LARGE SCALE GENOMIC DNA]</scope>
    <source>
        <strain>JCSC1435</strain>
    </source>
</reference>
<evidence type="ECO:0000255" key="1">
    <source>
        <dbReference type="HAMAP-Rule" id="MF_00051"/>
    </source>
</evidence>
<organism>
    <name type="scientific">Staphylococcus haemolyticus (strain JCSC1435)</name>
    <dbReference type="NCBI Taxonomy" id="279808"/>
    <lineage>
        <taxon>Bacteria</taxon>
        <taxon>Bacillati</taxon>
        <taxon>Bacillota</taxon>
        <taxon>Bacilli</taxon>
        <taxon>Bacillales</taxon>
        <taxon>Staphylococcaceae</taxon>
        <taxon>Staphylococcus</taxon>
    </lineage>
</organism>
<name>GLYA_STAHJ</name>
<feature type="chain" id="PRO_0000235028" description="Serine hydroxymethyltransferase">
    <location>
        <begin position="1"/>
        <end position="412"/>
    </location>
</feature>
<feature type="binding site" evidence="1">
    <location>
        <position position="117"/>
    </location>
    <ligand>
        <name>(6S)-5,6,7,8-tetrahydrofolate</name>
        <dbReference type="ChEBI" id="CHEBI:57453"/>
    </ligand>
</feature>
<feature type="binding site" evidence="1">
    <location>
        <begin position="121"/>
        <end position="123"/>
    </location>
    <ligand>
        <name>(6S)-5,6,7,8-tetrahydrofolate</name>
        <dbReference type="ChEBI" id="CHEBI:57453"/>
    </ligand>
</feature>
<feature type="site" description="Plays an important role in substrate specificity" evidence="1">
    <location>
        <position position="225"/>
    </location>
</feature>
<feature type="modified residue" description="N6-(pyridoxal phosphate)lysine" evidence="1">
    <location>
        <position position="226"/>
    </location>
</feature>
<accession>Q4L7Z4</accession>
<keyword id="KW-0028">Amino-acid biosynthesis</keyword>
<keyword id="KW-0963">Cytoplasm</keyword>
<keyword id="KW-0554">One-carbon metabolism</keyword>
<keyword id="KW-0663">Pyridoxal phosphate</keyword>
<keyword id="KW-0808">Transferase</keyword>
<gene>
    <name evidence="1" type="primary">glyA</name>
    <name type="ordered locus">SH0922</name>
</gene>
<proteinExistence type="inferred from homology"/>
<sequence length="412" mass="45441">MSYIQNQDKAVYEAIQNEYNRQNNNIELIASENFVSEAVMEAQGSVMTNKYAEGYPGRRYYGGCDYVDVTETIAIERAKALFGAEHVNVQPHSGSQANMAVYLVALEMGDTVLGMNLSHGGHLTHGSPVNFSGKFYNFVDYGVDKETEKIDYEVVRQLAHEHKPKLIVAGTSAYSRQLDFKKFKEIADEVGAKLMVDMAHIAGLVAAGLHPNPVEHADFVTTTTHKTLRGPRGGLILCKEEYKKDIDKTIFPGIQGGPLEHVIAAKAVAFGEALEQDFKVYQEQVIKNAKVLSQTLQEEGFRIVSGGTDNHLLSVDVKNSVNVTGKEAEATLDSIGITCNKNTIPFDQEKAFVTSGIRLGTPTATTRGFDEEAFKEVGRIISLALKNPNNDTKLKEARERVSRLTAKYPLYE</sequence>
<dbReference type="EC" id="2.1.2.1" evidence="1"/>
<dbReference type="EMBL" id="AP006716">
    <property type="protein sequence ID" value="BAE04231.1"/>
    <property type="molecule type" value="Genomic_DNA"/>
</dbReference>
<dbReference type="RefSeq" id="WP_011275233.1">
    <property type="nucleotide sequence ID" value="NC_007168.1"/>
</dbReference>
<dbReference type="SMR" id="Q4L7Z4"/>
<dbReference type="KEGG" id="sha:SH0922"/>
<dbReference type="eggNOG" id="COG0112">
    <property type="taxonomic scope" value="Bacteria"/>
</dbReference>
<dbReference type="HOGENOM" id="CLU_022477_2_1_9"/>
<dbReference type="OrthoDB" id="9803846at2"/>
<dbReference type="UniPathway" id="UPA00193"/>
<dbReference type="UniPathway" id="UPA00288">
    <property type="reaction ID" value="UER01023"/>
</dbReference>
<dbReference type="Proteomes" id="UP000000543">
    <property type="component" value="Chromosome"/>
</dbReference>
<dbReference type="GO" id="GO:0005829">
    <property type="term" value="C:cytosol"/>
    <property type="evidence" value="ECO:0007669"/>
    <property type="project" value="TreeGrafter"/>
</dbReference>
<dbReference type="GO" id="GO:0004372">
    <property type="term" value="F:glycine hydroxymethyltransferase activity"/>
    <property type="evidence" value="ECO:0007669"/>
    <property type="project" value="UniProtKB-UniRule"/>
</dbReference>
<dbReference type="GO" id="GO:0030170">
    <property type="term" value="F:pyridoxal phosphate binding"/>
    <property type="evidence" value="ECO:0007669"/>
    <property type="project" value="UniProtKB-UniRule"/>
</dbReference>
<dbReference type="GO" id="GO:0019264">
    <property type="term" value="P:glycine biosynthetic process from serine"/>
    <property type="evidence" value="ECO:0007669"/>
    <property type="project" value="UniProtKB-UniRule"/>
</dbReference>
<dbReference type="GO" id="GO:0035999">
    <property type="term" value="P:tetrahydrofolate interconversion"/>
    <property type="evidence" value="ECO:0007669"/>
    <property type="project" value="UniProtKB-UniRule"/>
</dbReference>
<dbReference type="CDD" id="cd00378">
    <property type="entry name" value="SHMT"/>
    <property type="match status" value="1"/>
</dbReference>
<dbReference type="FunFam" id="3.40.640.10:FF:000001">
    <property type="entry name" value="Serine hydroxymethyltransferase"/>
    <property type="match status" value="1"/>
</dbReference>
<dbReference type="FunFam" id="3.90.1150.10:FF:000003">
    <property type="entry name" value="Serine hydroxymethyltransferase"/>
    <property type="match status" value="1"/>
</dbReference>
<dbReference type="Gene3D" id="3.90.1150.10">
    <property type="entry name" value="Aspartate Aminotransferase, domain 1"/>
    <property type="match status" value="1"/>
</dbReference>
<dbReference type="Gene3D" id="3.40.640.10">
    <property type="entry name" value="Type I PLP-dependent aspartate aminotransferase-like (Major domain)"/>
    <property type="match status" value="1"/>
</dbReference>
<dbReference type="HAMAP" id="MF_00051">
    <property type="entry name" value="SHMT"/>
    <property type="match status" value="1"/>
</dbReference>
<dbReference type="InterPro" id="IPR015424">
    <property type="entry name" value="PyrdxlP-dep_Trfase"/>
</dbReference>
<dbReference type="InterPro" id="IPR015421">
    <property type="entry name" value="PyrdxlP-dep_Trfase_major"/>
</dbReference>
<dbReference type="InterPro" id="IPR015422">
    <property type="entry name" value="PyrdxlP-dep_Trfase_small"/>
</dbReference>
<dbReference type="InterPro" id="IPR001085">
    <property type="entry name" value="Ser_HO-MeTrfase"/>
</dbReference>
<dbReference type="InterPro" id="IPR049943">
    <property type="entry name" value="Ser_HO-MeTrfase-like"/>
</dbReference>
<dbReference type="InterPro" id="IPR019798">
    <property type="entry name" value="Ser_HO-MeTrfase_PLP_BS"/>
</dbReference>
<dbReference type="InterPro" id="IPR039429">
    <property type="entry name" value="SHMT-like_dom"/>
</dbReference>
<dbReference type="NCBIfam" id="NF000586">
    <property type="entry name" value="PRK00011.1"/>
    <property type="match status" value="1"/>
</dbReference>
<dbReference type="PANTHER" id="PTHR11680">
    <property type="entry name" value="SERINE HYDROXYMETHYLTRANSFERASE"/>
    <property type="match status" value="1"/>
</dbReference>
<dbReference type="PANTHER" id="PTHR11680:SF35">
    <property type="entry name" value="SERINE HYDROXYMETHYLTRANSFERASE 1"/>
    <property type="match status" value="1"/>
</dbReference>
<dbReference type="Pfam" id="PF00464">
    <property type="entry name" value="SHMT"/>
    <property type="match status" value="1"/>
</dbReference>
<dbReference type="PIRSF" id="PIRSF000412">
    <property type="entry name" value="SHMT"/>
    <property type="match status" value="1"/>
</dbReference>
<dbReference type="SUPFAM" id="SSF53383">
    <property type="entry name" value="PLP-dependent transferases"/>
    <property type="match status" value="1"/>
</dbReference>
<dbReference type="PROSITE" id="PS00096">
    <property type="entry name" value="SHMT"/>
    <property type="match status" value="1"/>
</dbReference>